<keyword id="KW-0106">Calcium</keyword>
<keyword id="KW-0167">Capsid protein</keyword>
<keyword id="KW-1154">Intermediate capsid protein</keyword>
<keyword id="KW-0479">Metal-binding</keyword>
<keyword id="KW-0832">Ubl conjugation</keyword>
<keyword id="KW-0946">Virion</keyword>
<keyword id="KW-0862">Zinc</keyword>
<sequence>MEVLYSISKTLKDARDKIVEGTLYSNVSDIIQQFNQMIVTMNGNEFQTGGIGTLPIRNWAFDFGLLGTTLLNLDANYVETARTTIEYFIDFIDNVCMDEMARESQRNGIAPQSDALRKLSGIKFKRINFNNSSEYIENWNLQNRRQRTGFVFHKPNIFPYSASFTLNRSQPLHDNLMGTMWLNAGSEIQVAGFDYSCALNAPANIQQFEHIVQLRRALTTATITILPDAERFSFPRVINSADGATTWYFNPVILRPNNVEIEFLLNGQIINTYQARFGTIIARNFDTIRLSFQLMRPPNMTPAVNALFPQAQPFQHHATVGLTLRIDSAVCESVLADSNETMLANVTAVRQEYAVPVGPVFPPGMNWTELITNYSPSREDNLQRVFTVASIRSMLIK</sequence>
<feature type="chain" id="PRO_0000368162" description="Intermediate capsid protein VP6">
    <location>
        <begin position="1"/>
        <end position="397"/>
    </location>
</feature>
<feature type="region of interest" description="Interaction with the inner capsid protein VP2" evidence="1">
    <location>
        <begin position="62"/>
        <end position="73"/>
    </location>
</feature>
<feature type="binding site" evidence="1">
    <location>
        <position position="153"/>
    </location>
    <ligand>
        <name>Zn(2+)</name>
        <dbReference type="ChEBI" id="CHEBI:29105"/>
        <note>ligand shared between all trimeric partners</note>
    </ligand>
</feature>
<feature type="binding site" evidence="1">
    <location>
        <position position="266"/>
    </location>
    <ligand>
        <name>Ca(2+)</name>
        <dbReference type="ChEBI" id="CHEBI:29108"/>
    </ligand>
</feature>
<feature type="binding site" evidence="1">
    <location>
        <position position="286"/>
    </location>
    <ligand>
        <name>Ca(2+)</name>
        <dbReference type="ChEBI" id="CHEBI:29108"/>
    </ligand>
</feature>
<organismHost>
    <name type="scientific">Equus caballus</name>
    <name type="common">Horse</name>
    <dbReference type="NCBI Taxonomy" id="9796"/>
</organismHost>
<evidence type="ECO:0000255" key="1">
    <source>
        <dbReference type="HAMAP-Rule" id="MF_04129"/>
    </source>
</evidence>
<name>VP6_ROTEL</name>
<accession>Q86347</accession>
<reference key="1">
    <citation type="submission" date="1996-01" db="EMBL/GenBank/DDBJ databases">
        <title>Comparative sequence analysis of the VP6 gene of equine rotaviruses.</title>
        <authorList>
            <person name="Minamoto N."/>
        </authorList>
    </citation>
    <scope>NUCLEOTIDE SEQUENCE [GENOMIC RNA]</scope>
</reference>
<proteinExistence type="inferred from homology"/>
<dbReference type="EMBL" id="D82974">
    <property type="protein sequence ID" value="BAA11662.1"/>
    <property type="molecule type" value="Genomic_RNA"/>
</dbReference>
<dbReference type="SMR" id="Q86347"/>
<dbReference type="GO" id="GO:0019031">
    <property type="term" value="C:viral envelope"/>
    <property type="evidence" value="ECO:0007669"/>
    <property type="project" value="UniProtKB-UniRule"/>
</dbReference>
<dbReference type="GO" id="GO:0039626">
    <property type="term" value="C:viral intermediate capsid"/>
    <property type="evidence" value="ECO:0007669"/>
    <property type="project" value="UniProtKB-UniRule"/>
</dbReference>
<dbReference type="GO" id="GO:0046789">
    <property type="term" value="F:host cell surface receptor binding"/>
    <property type="evidence" value="ECO:0007669"/>
    <property type="project" value="UniProtKB-UniRule"/>
</dbReference>
<dbReference type="GO" id="GO:0046872">
    <property type="term" value="F:metal ion binding"/>
    <property type="evidence" value="ECO:0007669"/>
    <property type="project" value="UniProtKB-UniRule"/>
</dbReference>
<dbReference type="GO" id="GO:0005198">
    <property type="term" value="F:structural molecule activity"/>
    <property type="evidence" value="ECO:0007669"/>
    <property type="project" value="UniProtKB-UniRule"/>
</dbReference>
<dbReference type="GO" id="GO:0019064">
    <property type="term" value="P:fusion of virus membrane with host plasma membrane"/>
    <property type="evidence" value="ECO:0007669"/>
    <property type="project" value="UniProtKB-UniRule"/>
</dbReference>
<dbReference type="FunFam" id="2.60.120.170:FF:000001">
    <property type="entry name" value="Intermediate capsid protein VP6"/>
    <property type="match status" value="1"/>
</dbReference>
<dbReference type="Gene3D" id="2.60.120.170">
    <property type="match status" value="1"/>
</dbReference>
<dbReference type="Gene3D" id="1.10.1350.10">
    <property type="entry name" value="Viral capsid alpha domain"/>
    <property type="match status" value="1"/>
</dbReference>
<dbReference type="HAMAP" id="MF_04126">
    <property type="entry name" value="Rota_VP6"/>
    <property type="match status" value="1"/>
</dbReference>
<dbReference type="HAMAP" id="MF_04129">
    <property type="entry name" value="Rota_VP6_A"/>
    <property type="match status" value="1"/>
</dbReference>
<dbReference type="InterPro" id="IPR008980">
    <property type="entry name" value="Capsid_hemagglutn"/>
</dbReference>
<dbReference type="InterPro" id="IPR001385">
    <property type="entry name" value="Rotavirus_A/C_VP6"/>
</dbReference>
<dbReference type="InterPro" id="IPR008935">
    <property type="entry name" value="Virus_capsid_a-hlx_vir"/>
</dbReference>
<dbReference type="Pfam" id="PF00980">
    <property type="entry name" value="Rota_Capsid_VP6"/>
    <property type="match status" value="1"/>
</dbReference>
<dbReference type="SUPFAM" id="SSF48345">
    <property type="entry name" value="A virus capsid protein alpha-helical domain"/>
    <property type="match status" value="1"/>
</dbReference>
<dbReference type="SUPFAM" id="SSF49818">
    <property type="entry name" value="Viral protein domain"/>
    <property type="match status" value="1"/>
</dbReference>
<organism>
    <name type="scientific">Rotavirus A (isolate RVA/Equine/United Kingdom/L338/1988/G13P12[18])</name>
    <name type="common">RV-A</name>
    <dbReference type="NCBI Taxonomy" id="36441"/>
    <lineage>
        <taxon>Viruses</taxon>
        <taxon>Riboviria</taxon>
        <taxon>Orthornavirae</taxon>
        <taxon>Duplornaviricota</taxon>
        <taxon>Resentoviricetes</taxon>
        <taxon>Reovirales</taxon>
        <taxon>Sedoreoviridae</taxon>
        <taxon>Rotavirus</taxon>
        <taxon>Rotavirus A</taxon>
    </lineage>
</organism>
<comment type="function">
    <text evidence="1">Intermediate capsid protein that self assembles to form an icosahedral capsid with a T=13 symmetry, which consists of 230 trimers of VP6, with channels at each of its five-fold vertices. This capsid constitutes the middle concentric layer of the viral mature particle. The innermost VP2 capsid and the intermediate VP6 capsid remain intact following cell entry to protect the dsRNA from degradation and to prevent unfavorable antiviral responses in the host cell during all the replication cycle of the virus. Nascent transcripts are transcribed within the structural confines of this double-layered particle (DLP) and are extruded through the channels at the five-fold axes. VP6 is required for the transcription activity of the DLP.</text>
</comment>
<comment type="subunit">
    <text evidence="1">Homotrimer. Interacts with the inner capsid protein VP2. Interacts with the outer capsid glycoprotein VP7. Interacts with the outer capsid protein VP5*.</text>
</comment>
<comment type="subcellular location">
    <subcellularLocation>
        <location evidence="1">Virion</location>
    </subcellularLocation>
    <text evidence="1">Component of the intermediate capsid. Also found in spherical cytoplasmic structures, called virus factories, that appear early after infection and are the site of viral replication and packaging.</text>
</comment>
<comment type="PTM">
    <text evidence="1">The N-terminus is blocked.</text>
</comment>
<comment type="PTM">
    <text evidence="1">Sumoylated with SUMO1 and SUMO2. Sumoylation of viral proteins seems to have a positive role on viral replication.</text>
</comment>
<comment type="miscellaneous">
    <text evidence="1">The VP6 trimer contains a zinc ion located at the center of the molecule. The zinc ion is not essential for either trimerization or transcription activity of the DLP. Zinc-depleted VP6 has an increased sensitivity to proteases.</text>
</comment>
<comment type="similarity">
    <text evidence="1">Belongs to the rotavirus VP6 family.</text>
</comment>
<protein>
    <recommendedName>
        <fullName evidence="1">Intermediate capsid protein VP6</fullName>
    </recommendedName>
</protein>